<reference key="1">
    <citation type="journal article" date="2000" name="Nature">
        <title>DNA sequence of both chromosomes of the cholera pathogen Vibrio cholerae.</title>
        <authorList>
            <person name="Heidelberg J.F."/>
            <person name="Eisen J.A."/>
            <person name="Nelson W.C."/>
            <person name="Clayton R.A."/>
            <person name="Gwinn M.L."/>
            <person name="Dodson R.J."/>
            <person name="Haft D.H."/>
            <person name="Hickey E.K."/>
            <person name="Peterson J.D."/>
            <person name="Umayam L.A."/>
            <person name="Gill S.R."/>
            <person name="Nelson K.E."/>
            <person name="Read T.D."/>
            <person name="Tettelin H."/>
            <person name="Richardson D.L."/>
            <person name="Ermolaeva M.D."/>
            <person name="Vamathevan J.J."/>
            <person name="Bass S."/>
            <person name="Qin H."/>
            <person name="Dragoi I."/>
            <person name="Sellers P."/>
            <person name="McDonald L.A."/>
            <person name="Utterback T.R."/>
            <person name="Fleischmann R.D."/>
            <person name="Nierman W.C."/>
            <person name="White O."/>
            <person name="Salzberg S.L."/>
            <person name="Smith H.O."/>
            <person name="Colwell R.R."/>
            <person name="Mekalanos J.J."/>
            <person name="Venter J.C."/>
            <person name="Fraser C.M."/>
        </authorList>
    </citation>
    <scope>NUCLEOTIDE SEQUENCE [LARGE SCALE GENOMIC DNA]</scope>
    <source>
        <strain>ATCC 39315 / El Tor Inaba N16961</strain>
    </source>
</reference>
<proteinExistence type="inferred from homology"/>
<gene>
    <name evidence="1" type="primary">rnfC</name>
    <name type="ordered locus">VC_1015</name>
</gene>
<name>RNFC_VIBCH</name>
<organism>
    <name type="scientific">Vibrio cholerae serotype O1 (strain ATCC 39315 / El Tor Inaba N16961)</name>
    <dbReference type="NCBI Taxonomy" id="243277"/>
    <lineage>
        <taxon>Bacteria</taxon>
        <taxon>Pseudomonadati</taxon>
        <taxon>Pseudomonadota</taxon>
        <taxon>Gammaproteobacteria</taxon>
        <taxon>Vibrionales</taxon>
        <taxon>Vibrionaceae</taxon>
        <taxon>Vibrio</taxon>
    </lineage>
</organism>
<comment type="function">
    <text evidence="1">Part of a membrane-bound complex that couples electron transfer with translocation of ions across the membrane.</text>
</comment>
<comment type="cofactor">
    <cofactor evidence="1">
        <name>[4Fe-4S] cluster</name>
        <dbReference type="ChEBI" id="CHEBI:49883"/>
    </cofactor>
    <text evidence="1">Binds 2 [4Fe-4S] clusters per subunit.</text>
</comment>
<comment type="subunit">
    <text evidence="1">The complex is composed of six subunits: RnfA, RnfB, RnfC, RnfD, RnfE and RnfG.</text>
</comment>
<comment type="subcellular location">
    <subcellularLocation>
        <location evidence="1">Cell inner membrane</location>
        <topology evidence="1">Peripheral membrane protein</topology>
    </subcellularLocation>
</comment>
<comment type="similarity">
    <text evidence="1">Belongs to the 4Fe4S bacterial-type ferredoxin family. RnfC subfamily.</text>
</comment>
<comment type="sequence caution" evidence="3">
    <conflict type="erroneous initiation">
        <sequence resource="EMBL-CDS" id="AAF94176"/>
    </conflict>
</comment>
<sequence>MLSLIEQIKSGKLWDFPGGIHPFENKHQSNRQPIINASIPNELVLPLKQHIGKAGDLLVKVGDRVLKGQPLTQYTSTFMLPIHAPTSGVISAIEPRTVAHPSGLSELCIVLTPDQQEEWFELQPQPDFQQLTPETLLELIRQAGISGMGGAGFPTAKKLQSGLSRTEILIINAAECEPYITADDVLMRQYAHEIIQGIEIVEHILKPKLTIIGIEDNKPEAVAALQQAAQDKPMVIRVIPTKYPSGGEKQLIKILTNLEVPKGGIPADIGLMVQNVGSLQAIARAIVHGEPLIRRVVTLTGDCFRKPRNVWALLGTPVQALLNEFGYKADKKLPRLIMGGPMMGFTLPHAQVPITKTANCILAPTRNELTSSDNEMACIRCGQCAEACPVSLLPQQLQWHAKAEEFDKCEELDLKDCIECGACAYVCPSEIPLVQYYRQAKAEIRTRSLEAEAAERAKARFEEKKARMERDKAERENRFKQAAEDRRKEMQQQGGSDAIAAAIERVKAQKAQLEPTDNSVKPAIAAAIARAKAKQAEAAQSGASEPDNSEMAKLREERKRQARERKAQKGEVTEASTSDGADDKKSAVAAAIARAKARKAEQQETESAAQPAQATPSSDDADPKKAAVAAAIARAKARKAEQQETESTAQPAQATPSSDDADPKKAAVAAAIARAKARKAEKQETESAAQPTQATPSSDDADPKKAAVAAAIARAKARKAEQQETESAAQPTQATPSSDDADPKKAAVAAAIARAKARKAAQQSSSNLNAEEKD</sequence>
<keyword id="KW-0004">4Fe-4S</keyword>
<keyword id="KW-0997">Cell inner membrane</keyword>
<keyword id="KW-1003">Cell membrane</keyword>
<keyword id="KW-0249">Electron transport</keyword>
<keyword id="KW-0408">Iron</keyword>
<keyword id="KW-0411">Iron-sulfur</keyword>
<keyword id="KW-0472">Membrane</keyword>
<keyword id="KW-0479">Metal-binding</keyword>
<keyword id="KW-1185">Reference proteome</keyword>
<keyword id="KW-0677">Repeat</keyword>
<keyword id="KW-1278">Translocase</keyword>
<keyword id="KW-0813">Transport</keyword>
<dbReference type="EC" id="7.-.-.-" evidence="1"/>
<dbReference type="EMBL" id="AE003852">
    <property type="protein sequence ID" value="AAF94176.1"/>
    <property type="status" value="ALT_INIT"/>
    <property type="molecule type" value="Genomic_DNA"/>
</dbReference>
<dbReference type="PIR" id="E82252">
    <property type="entry name" value="E82252"/>
</dbReference>
<dbReference type="RefSeq" id="NP_230661.1">
    <property type="nucleotide sequence ID" value="NC_002505.1"/>
</dbReference>
<dbReference type="SMR" id="Q9KT88"/>
<dbReference type="STRING" id="243277.VC_1015"/>
<dbReference type="DNASU" id="2614286"/>
<dbReference type="EnsemblBacteria" id="AAF94176">
    <property type="protein sequence ID" value="AAF94176"/>
    <property type="gene ID" value="VC_1015"/>
</dbReference>
<dbReference type="KEGG" id="vch:VC_1015"/>
<dbReference type="PATRIC" id="fig|243277.26.peg.969"/>
<dbReference type="eggNOG" id="COG4656">
    <property type="taxonomic scope" value="Bacteria"/>
</dbReference>
<dbReference type="HOGENOM" id="CLU_010808_2_1_6"/>
<dbReference type="Proteomes" id="UP000000584">
    <property type="component" value="Chromosome 1"/>
</dbReference>
<dbReference type="GO" id="GO:0005886">
    <property type="term" value="C:plasma membrane"/>
    <property type="evidence" value="ECO:0007669"/>
    <property type="project" value="UniProtKB-SubCell"/>
</dbReference>
<dbReference type="GO" id="GO:0051539">
    <property type="term" value="F:4 iron, 4 sulfur cluster binding"/>
    <property type="evidence" value="ECO:0007669"/>
    <property type="project" value="UniProtKB-KW"/>
</dbReference>
<dbReference type="GO" id="GO:0009055">
    <property type="term" value="F:electron transfer activity"/>
    <property type="evidence" value="ECO:0007669"/>
    <property type="project" value="InterPro"/>
</dbReference>
<dbReference type="GO" id="GO:0046872">
    <property type="term" value="F:metal ion binding"/>
    <property type="evidence" value="ECO:0007669"/>
    <property type="project" value="UniProtKB-KW"/>
</dbReference>
<dbReference type="GO" id="GO:0022900">
    <property type="term" value="P:electron transport chain"/>
    <property type="evidence" value="ECO:0007669"/>
    <property type="project" value="UniProtKB-UniRule"/>
</dbReference>
<dbReference type="FunFam" id="3.30.70.20:FF:000044">
    <property type="entry name" value="Ion-translocating oxidoreductase complex subunit C"/>
    <property type="match status" value="1"/>
</dbReference>
<dbReference type="FunFam" id="3.40.50.11540:FF:000004">
    <property type="entry name" value="Ion-translocating oxidoreductase complex subunit C"/>
    <property type="match status" value="1"/>
</dbReference>
<dbReference type="Gene3D" id="2.40.50.100">
    <property type="match status" value="1"/>
</dbReference>
<dbReference type="Gene3D" id="3.30.70.20">
    <property type="match status" value="1"/>
</dbReference>
<dbReference type="Gene3D" id="3.40.50.11540">
    <property type="entry name" value="NADH-ubiquinone oxidoreductase 51kDa subunit"/>
    <property type="match status" value="1"/>
</dbReference>
<dbReference type="HAMAP" id="MF_00461">
    <property type="entry name" value="RsxC_RnfC"/>
    <property type="match status" value="1"/>
</dbReference>
<dbReference type="InterPro" id="IPR017896">
    <property type="entry name" value="4Fe4S_Fe-S-bd"/>
</dbReference>
<dbReference type="InterPro" id="IPR017900">
    <property type="entry name" value="4Fe4S_Fe_S_CS"/>
</dbReference>
<dbReference type="InterPro" id="IPR010208">
    <property type="entry name" value="Ion_transpt_RnfC/RsxC"/>
</dbReference>
<dbReference type="InterPro" id="IPR011538">
    <property type="entry name" value="Nuo51_FMN-bd"/>
</dbReference>
<dbReference type="InterPro" id="IPR037225">
    <property type="entry name" value="Nuo51_FMN-bd_sf"/>
</dbReference>
<dbReference type="InterPro" id="IPR026902">
    <property type="entry name" value="RnfC_N"/>
</dbReference>
<dbReference type="InterPro" id="IPR019554">
    <property type="entry name" value="Soluble_ligand-bd"/>
</dbReference>
<dbReference type="NCBIfam" id="NF003454">
    <property type="entry name" value="PRK05035.1"/>
    <property type="match status" value="1"/>
</dbReference>
<dbReference type="NCBIfam" id="TIGR01945">
    <property type="entry name" value="rnfC"/>
    <property type="match status" value="1"/>
</dbReference>
<dbReference type="PANTHER" id="PTHR43034">
    <property type="entry name" value="ION-TRANSLOCATING OXIDOREDUCTASE COMPLEX SUBUNIT C"/>
    <property type="match status" value="1"/>
</dbReference>
<dbReference type="PANTHER" id="PTHR43034:SF2">
    <property type="entry name" value="ION-TRANSLOCATING OXIDOREDUCTASE COMPLEX SUBUNIT C"/>
    <property type="match status" value="1"/>
</dbReference>
<dbReference type="Pfam" id="PF01512">
    <property type="entry name" value="Complex1_51K"/>
    <property type="match status" value="1"/>
</dbReference>
<dbReference type="Pfam" id="PF12838">
    <property type="entry name" value="Fer4_7"/>
    <property type="match status" value="1"/>
</dbReference>
<dbReference type="Pfam" id="PF13375">
    <property type="entry name" value="RnfC_N"/>
    <property type="match status" value="1"/>
</dbReference>
<dbReference type="Pfam" id="PF10531">
    <property type="entry name" value="SLBB"/>
    <property type="match status" value="1"/>
</dbReference>
<dbReference type="SUPFAM" id="SSF46548">
    <property type="entry name" value="alpha-helical ferredoxin"/>
    <property type="match status" value="1"/>
</dbReference>
<dbReference type="SUPFAM" id="SSF142019">
    <property type="entry name" value="Nqo1 FMN-binding domain-like"/>
    <property type="match status" value="1"/>
</dbReference>
<dbReference type="PROSITE" id="PS00198">
    <property type="entry name" value="4FE4S_FER_1"/>
    <property type="match status" value="2"/>
</dbReference>
<dbReference type="PROSITE" id="PS51379">
    <property type="entry name" value="4FE4S_FER_2"/>
    <property type="match status" value="2"/>
</dbReference>
<accession>Q9KT88</accession>
<evidence type="ECO:0000255" key="1">
    <source>
        <dbReference type="HAMAP-Rule" id="MF_00461"/>
    </source>
</evidence>
<evidence type="ECO:0000256" key="2">
    <source>
        <dbReference type="SAM" id="MobiDB-lite"/>
    </source>
</evidence>
<evidence type="ECO:0000305" key="3"/>
<feature type="chain" id="PRO_0000073213" description="Ion-translocating oxidoreductase complex subunit C">
    <location>
        <begin position="1"/>
        <end position="774"/>
    </location>
</feature>
<feature type="domain" description="4Fe-4S ferredoxin-type 1" evidence="1">
    <location>
        <begin position="368"/>
        <end position="398"/>
    </location>
</feature>
<feature type="domain" description="4Fe-4S ferredoxin-type 2" evidence="1">
    <location>
        <begin position="408"/>
        <end position="437"/>
    </location>
</feature>
<feature type="region of interest" description="Disordered" evidence="2">
    <location>
        <begin position="459"/>
        <end position="496"/>
    </location>
</feature>
<feature type="region of interest" description="Disordered" evidence="2">
    <location>
        <begin position="533"/>
        <end position="774"/>
    </location>
</feature>
<feature type="compositionally biased region" description="Basic and acidic residues" evidence="2">
    <location>
        <begin position="459"/>
        <end position="490"/>
    </location>
</feature>
<feature type="compositionally biased region" description="Low complexity" evidence="2">
    <location>
        <begin position="533"/>
        <end position="545"/>
    </location>
</feature>
<feature type="compositionally biased region" description="Basic and acidic residues" evidence="2">
    <location>
        <begin position="550"/>
        <end position="572"/>
    </location>
</feature>
<feature type="compositionally biased region" description="Low complexity" evidence="2">
    <location>
        <begin position="605"/>
        <end position="618"/>
    </location>
</feature>
<feature type="compositionally biased region" description="Polar residues" evidence="2">
    <location>
        <begin position="645"/>
        <end position="658"/>
    </location>
</feature>
<feature type="compositionally biased region" description="Polar residues" evidence="2">
    <location>
        <begin position="686"/>
        <end position="698"/>
    </location>
</feature>
<feature type="compositionally biased region" description="Polar residues" evidence="2">
    <location>
        <begin position="725"/>
        <end position="738"/>
    </location>
</feature>
<feature type="compositionally biased region" description="Polar residues" evidence="2">
    <location>
        <begin position="762"/>
        <end position="774"/>
    </location>
</feature>
<feature type="binding site" evidence="1">
    <location>
        <position position="378"/>
    </location>
    <ligand>
        <name>[4Fe-4S] cluster</name>
        <dbReference type="ChEBI" id="CHEBI:49883"/>
        <label>1</label>
    </ligand>
</feature>
<feature type="binding site" evidence="1">
    <location>
        <position position="381"/>
    </location>
    <ligand>
        <name>[4Fe-4S] cluster</name>
        <dbReference type="ChEBI" id="CHEBI:49883"/>
        <label>1</label>
    </ligand>
</feature>
<feature type="binding site" evidence="1">
    <location>
        <position position="384"/>
    </location>
    <ligand>
        <name>[4Fe-4S] cluster</name>
        <dbReference type="ChEBI" id="CHEBI:49883"/>
        <label>1</label>
    </ligand>
</feature>
<feature type="binding site" evidence="1">
    <location>
        <position position="388"/>
    </location>
    <ligand>
        <name>[4Fe-4S] cluster</name>
        <dbReference type="ChEBI" id="CHEBI:49883"/>
        <label>2</label>
    </ligand>
</feature>
<feature type="binding site" evidence="1">
    <location>
        <position position="417"/>
    </location>
    <ligand>
        <name>[4Fe-4S] cluster</name>
        <dbReference type="ChEBI" id="CHEBI:49883"/>
        <label>2</label>
    </ligand>
</feature>
<feature type="binding site" evidence="1">
    <location>
        <position position="420"/>
    </location>
    <ligand>
        <name>[4Fe-4S] cluster</name>
        <dbReference type="ChEBI" id="CHEBI:49883"/>
        <label>2</label>
    </ligand>
</feature>
<feature type="binding site" evidence="1">
    <location>
        <position position="423"/>
    </location>
    <ligand>
        <name>[4Fe-4S] cluster</name>
        <dbReference type="ChEBI" id="CHEBI:49883"/>
        <label>2</label>
    </ligand>
</feature>
<feature type="binding site" evidence="1">
    <location>
        <position position="427"/>
    </location>
    <ligand>
        <name>[4Fe-4S] cluster</name>
        <dbReference type="ChEBI" id="CHEBI:49883"/>
        <label>1</label>
    </ligand>
</feature>
<protein>
    <recommendedName>
        <fullName evidence="1">Ion-translocating oxidoreductase complex subunit C</fullName>
        <ecNumber evidence="1">7.-.-.-</ecNumber>
    </recommendedName>
    <alternativeName>
        <fullName evidence="1">Rnf electron transport complex subunit C</fullName>
    </alternativeName>
</protein>